<reference key="1">
    <citation type="journal article" date="2001" name="Proc. Natl. Acad. Sci. U.S.A.">
        <title>Human mitochondrial topoisomerase I.</title>
        <authorList>
            <person name="Zhang H."/>
            <person name="Barcelo J.M."/>
            <person name="Lee B."/>
            <person name="Kohlhagen G."/>
            <person name="Zimonjic D.B."/>
            <person name="Popescu N.C."/>
            <person name="Pommier Y."/>
        </authorList>
    </citation>
    <scope>NUCLEOTIDE SEQUENCE [GENOMIC DNA / MRNA] (ISOFORM 1)</scope>
    <scope>FUNCTION</scope>
    <scope>COFACTOR</scope>
    <scope>SUBCELLULAR LOCATION</scope>
    <scope>TRANSIT PEPTIDE CLEAVAGE SITE</scope>
    <scope>TISSUE SPECIFICITY</scope>
</reference>
<reference key="2">
    <citation type="journal article" date="2004" name="Nat. Genet.">
        <title>Complete sequencing and characterization of 21,243 full-length human cDNAs.</title>
        <authorList>
            <person name="Ota T."/>
            <person name="Suzuki Y."/>
            <person name="Nishikawa T."/>
            <person name="Otsuki T."/>
            <person name="Sugiyama T."/>
            <person name="Irie R."/>
            <person name="Wakamatsu A."/>
            <person name="Hayashi K."/>
            <person name="Sato H."/>
            <person name="Nagai K."/>
            <person name="Kimura K."/>
            <person name="Makita H."/>
            <person name="Sekine M."/>
            <person name="Obayashi M."/>
            <person name="Nishi T."/>
            <person name="Shibahara T."/>
            <person name="Tanaka T."/>
            <person name="Ishii S."/>
            <person name="Yamamoto J."/>
            <person name="Saito K."/>
            <person name="Kawai Y."/>
            <person name="Isono Y."/>
            <person name="Nakamura Y."/>
            <person name="Nagahari K."/>
            <person name="Murakami K."/>
            <person name="Yasuda T."/>
            <person name="Iwayanagi T."/>
            <person name="Wagatsuma M."/>
            <person name="Shiratori A."/>
            <person name="Sudo H."/>
            <person name="Hosoiri T."/>
            <person name="Kaku Y."/>
            <person name="Kodaira H."/>
            <person name="Kondo H."/>
            <person name="Sugawara M."/>
            <person name="Takahashi M."/>
            <person name="Kanda K."/>
            <person name="Yokoi T."/>
            <person name="Furuya T."/>
            <person name="Kikkawa E."/>
            <person name="Omura Y."/>
            <person name="Abe K."/>
            <person name="Kamihara K."/>
            <person name="Katsuta N."/>
            <person name="Sato K."/>
            <person name="Tanikawa M."/>
            <person name="Yamazaki M."/>
            <person name="Ninomiya K."/>
            <person name="Ishibashi T."/>
            <person name="Yamashita H."/>
            <person name="Murakawa K."/>
            <person name="Fujimori K."/>
            <person name="Tanai H."/>
            <person name="Kimata M."/>
            <person name="Watanabe M."/>
            <person name="Hiraoka S."/>
            <person name="Chiba Y."/>
            <person name="Ishida S."/>
            <person name="Ono Y."/>
            <person name="Takiguchi S."/>
            <person name="Watanabe S."/>
            <person name="Yosida M."/>
            <person name="Hotuta T."/>
            <person name="Kusano J."/>
            <person name="Kanehori K."/>
            <person name="Takahashi-Fujii A."/>
            <person name="Hara H."/>
            <person name="Tanase T.-O."/>
            <person name="Nomura Y."/>
            <person name="Togiya S."/>
            <person name="Komai F."/>
            <person name="Hara R."/>
            <person name="Takeuchi K."/>
            <person name="Arita M."/>
            <person name="Imose N."/>
            <person name="Musashino K."/>
            <person name="Yuuki H."/>
            <person name="Oshima A."/>
            <person name="Sasaki N."/>
            <person name="Aotsuka S."/>
            <person name="Yoshikawa Y."/>
            <person name="Matsunawa H."/>
            <person name="Ichihara T."/>
            <person name="Shiohata N."/>
            <person name="Sano S."/>
            <person name="Moriya S."/>
            <person name="Momiyama H."/>
            <person name="Satoh N."/>
            <person name="Takami S."/>
            <person name="Terashima Y."/>
            <person name="Suzuki O."/>
            <person name="Nakagawa S."/>
            <person name="Senoh A."/>
            <person name="Mizoguchi H."/>
            <person name="Goto Y."/>
            <person name="Shimizu F."/>
            <person name="Wakebe H."/>
            <person name="Hishigaki H."/>
            <person name="Watanabe T."/>
            <person name="Sugiyama A."/>
            <person name="Takemoto M."/>
            <person name="Kawakami B."/>
            <person name="Yamazaki M."/>
            <person name="Watanabe K."/>
            <person name="Kumagai A."/>
            <person name="Itakura S."/>
            <person name="Fukuzumi Y."/>
            <person name="Fujimori Y."/>
            <person name="Komiyama M."/>
            <person name="Tashiro H."/>
            <person name="Tanigami A."/>
            <person name="Fujiwara T."/>
            <person name="Ono T."/>
            <person name="Yamada K."/>
            <person name="Fujii Y."/>
            <person name="Ozaki K."/>
            <person name="Hirao M."/>
            <person name="Ohmori Y."/>
            <person name="Kawabata A."/>
            <person name="Hikiji T."/>
            <person name="Kobatake N."/>
            <person name="Inagaki H."/>
            <person name="Ikema Y."/>
            <person name="Okamoto S."/>
            <person name="Okitani R."/>
            <person name="Kawakami T."/>
            <person name="Noguchi S."/>
            <person name="Itoh T."/>
            <person name="Shigeta K."/>
            <person name="Senba T."/>
            <person name="Matsumura K."/>
            <person name="Nakajima Y."/>
            <person name="Mizuno T."/>
            <person name="Morinaga M."/>
            <person name="Sasaki M."/>
            <person name="Togashi T."/>
            <person name="Oyama M."/>
            <person name="Hata H."/>
            <person name="Watanabe M."/>
            <person name="Komatsu T."/>
            <person name="Mizushima-Sugano J."/>
            <person name="Satoh T."/>
            <person name="Shirai Y."/>
            <person name="Takahashi Y."/>
            <person name="Nakagawa K."/>
            <person name="Okumura K."/>
            <person name="Nagase T."/>
            <person name="Nomura N."/>
            <person name="Kikuchi H."/>
            <person name="Masuho Y."/>
            <person name="Yamashita R."/>
            <person name="Nakai K."/>
            <person name="Yada T."/>
            <person name="Nakamura Y."/>
            <person name="Ohara O."/>
            <person name="Isogai T."/>
            <person name="Sugano S."/>
        </authorList>
    </citation>
    <scope>NUCLEOTIDE SEQUENCE [LARGE SCALE MRNA] (ISOFORM 2)</scope>
    <scope>VARIANT TRP-525</scope>
    <source>
        <tissue>Testis</tissue>
    </source>
</reference>
<reference key="3">
    <citation type="journal article" date="2006" name="Nature">
        <title>DNA sequence and analysis of human chromosome 8.</title>
        <authorList>
            <person name="Nusbaum C."/>
            <person name="Mikkelsen T.S."/>
            <person name="Zody M.C."/>
            <person name="Asakawa S."/>
            <person name="Taudien S."/>
            <person name="Garber M."/>
            <person name="Kodira C.D."/>
            <person name="Schueler M.G."/>
            <person name="Shimizu A."/>
            <person name="Whittaker C.A."/>
            <person name="Chang J.L."/>
            <person name="Cuomo C.A."/>
            <person name="Dewar K."/>
            <person name="FitzGerald M.G."/>
            <person name="Yang X."/>
            <person name="Allen N.R."/>
            <person name="Anderson S."/>
            <person name="Asakawa T."/>
            <person name="Blechschmidt K."/>
            <person name="Bloom T."/>
            <person name="Borowsky M.L."/>
            <person name="Butler J."/>
            <person name="Cook A."/>
            <person name="Corum B."/>
            <person name="DeArellano K."/>
            <person name="DeCaprio D."/>
            <person name="Dooley K.T."/>
            <person name="Dorris L. III"/>
            <person name="Engels R."/>
            <person name="Gloeckner G."/>
            <person name="Hafez N."/>
            <person name="Hagopian D.S."/>
            <person name="Hall J.L."/>
            <person name="Ishikawa S.K."/>
            <person name="Jaffe D.B."/>
            <person name="Kamat A."/>
            <person name="Kudoh J."/>
            <person name="Lehmann R."/>
            <person name="Lokitsang T."/>
            <person name="Macdonald P."/>
            <person name="Major J.E."/>
            <person name="Matthews C.D."/>
            <person name="Mauceli E."/>
            <person name="Menzel U."/>
            <person name="Mihalev A.H."/>
            <person name="Minoshima S."/>
            <person name="Murayama Y."/>
            <person name="Naylor J.W."/>
            <person name="Nicol R."/>
            <person name="Nguyen C."/>
            <person name="O'Leary S.B."/>
            <person name="O'Neill K."/>
            <person name="Parker S.C.J."/>
            <person name="Polley A."/>
            <person name="Raymond C.K."/>
            <person name="Reichwald K."/>
            <person name="Rodriguez J."/>
            <person name="Sasaki T."/>
            <person name="Schilhabel M."/>
            <person name="Siddiqui R."/>
            <person name="Smith C.L."/>
            <person name="Sneddon T.P."/>
            <person name="Talamas J.A."/>
            <person name="Tenzin P."/>
            <person name="Topham K."/>
            <person name="Venkataraman V."/>
            <person name="Wen G."/>
            <person name="Yamazaki S."/>
            <person name="Young S.K."/>
            <person name="Zeng Q."/>
            <person name="Zimmer A.R."/>
            <person name="Rosenthal A."/>
            <person name="Birren B.W."/>
            <person name="Platzer M."/>
            <person name="Shimizu N."/>
            <person name="Lander E.S."/>
        </authorList>
    </citation>
    <scope>NUCLEOTIDE SEQUENCE [LARGE SCALE GENOMIC DNA]</scope>
</reference>
<reference key="4">
    <citation type="journal article" date="2004" name="Genome Res.">
        <title>The status, quality, and expansion of the NIH full-length cDNA project: the Mammalian Gene Collection (MGC).</title>
        <authorList>
            <consortium name="The MGC Project Team"/>
        </authorList>
    </citation>
    <scope>NUCLEOTIDE SEQUENCE [LARGE SCALE MRNA] (ISOFORM 1)</scope>
    <scope>VARIANT ILE-256</scope>
    <source>
        <tissue>Brain</tissue>
        <tissue>Lung</tissue>
    </source>
</reference>
<name>TOP1M_HUMAN</name>
<comment type="function">
    <text evidence="1 5">Releases the supercoiling and torsional tension of DNA introduced during duplication of mitochondrial DNA by transiently cleaving and rejoining one strand of the DNA duplex. Introduces a single-strand break via transesterification at a target site in duplex DNA. The scissile phosphodiester is attacked by the catalytic tyrosine of the enzyme, resulting in the formation of a DNA-(3'-phosphotyrosyl)-enzyme intermediate and the expulsion of a 5'-OH DNA strand. The free DNA strand then rotates around the intact phosphodiester bond on the opposing strand, thus removing DNA supercoils. Finally, in the religation step, the DNA 5'-OH attacks the covalent intermediate to expel the active-site tyrosine and restore the DNA phosphodiester backbone (By similarity).</text>
</comment>
<comment type="catalytic activity">
    <reaction evidence="3">
        <text>ATP-independent breakage of single-stranded DNA, followed by passage and rejoining.</text>
        <dbReference type="EC" id="5.6.2.1"/>
    </reaction>
</comment>
<comment type="cofactor">
    <cofactor evidence="5">
        <name>Ca(2+)</name>
        <dbReference type="ChEBI" id="CHEBI:29108"/>
    </cofactor>
    <cofactor evidence="5">
        <name>Mg(2+)</name>
        <dbReference type="ChEBI" id="CHEBI:18420"/>
    </cofactor>
    <text evidence="5">Divalent metal ions (calcium or magnesium).</text>
</comment>
<comment type="subcellular location">
    <subcellularLocation>
        <location evidence="5">Mitochondrion</location>
    </subcellularLocation>
</comment>
<comment type="alternative products">
    <event type="alternative splicing"/>
    <isoform>
        <id>Q969P6-1</id>
        <name>1</name>
        <sequence type="displayed"/>
    </isoform>
    <isoform>
        <id>Q969P6-2</id>
        <name>2</name>
        <sequence type="described" ref="VSP_044783"/>
    </isoform>
</comment>
<comment type="tissue specificity">
    <text evidence="5">Ubiquitous; highest in skeletal muscle, heart, brain and fetal liver.</text>
</comment>
<comment type="similarity">
    <text evidence="9">Belongs to the type IB topoisomerase family.</text>
</comment>
<comment type="sequence caution" evidence="9">
    <conflict type="erroneous initiation">
        <sequence resource="EMBL-CDS" id="AAH44646"/>
    </conflict>
</comment>
<organism>
    <name type="scientific">Homo sapiens</name>
    <name type="common">Human</name>
    <dbReference type="NCBI Taxonomy" id="9606"/>
    <lineage>
        <taxon>Eukaryota</taxon>
        <taxon>Metazoa</taxon>
        <taxon>Chordata</taxon>
        <taxon>Craniata</taxon>
        <taxon>Vertebrata</taxon>
        <taxon>Euteleostomi</taxon>
        <taxon>Mammalia</taxon>
        <taxon>Eutheria</taxon>
        <taxon>Euarchontoglires</taxon>
        <taxon>Primates</taxon>
        <taxon>Haplorrhini</taxon>
        <taxon>Catarrhini</taxon>
        <taxon>Hominidae</taxon>
        <taxon>Homo</taxon>
    </lineage>
</organism>
<evidence type="ECO:0000250" key="1"/>
<evidence type="ECO:0000255" key="2">
    <source>
        <dbReference type="PROSITE-ProRule" id="PRU01382"/>
    </source>
</evidence>
<evidence type="ECO:0000255" key="3">
    <source>
        <dbReference type="PROSITE-ProRule" id="PRU10130"/>
    </source>
</evidence>
<evidence type="ECO:0000256" key="4">
    <source>
        <dbReference type="SAM" id="MobiDB-lite"/>
    </source>
</evidence>
<evidence type="ECO:0000269" key="5">
    <source>
    </source>
</evidence>
<evidence type="ECO:0000269" key="6">
    <source>
    </source>
</evidence>
<evidence type="ECO:0000269" key="7">
    <source>
    </source>
</evidence>
<evidence type="ECO:0000303" key="8">
    <source>
    </source>
</evidence>
<evidence type="ECO:0000305" key="9"/>
<evidence type="ECO:0000305" key="10">
    <source>
    </source>
</evidence>
<protein>
    <recommendedName>
        <fullName>DNA topoisomerase I, mitochondrial</fullName>
        <shortName>TOP1mt</shortName>
        <ecNumber evidence="3">5.6.2.1</ecNumber>
    </recommendedName>
</protein>
<feature type="transit peptide" description="Mitochondrion" evidence="10">
    <location>
        <begin position="1"/>
        <end position="50"/>
    </location>
</feature>
<feature type="chain" id="PRO_0000034797" description="DNA topoisomerase I, mitochondrial">
    <location>
        <begin position="51"/>
        <end position="601"/>
    </location>
</feature>
<feature type="domain" description="Topo IB-type catalytic" evidence="2">
    <location>
        <begin position="268"/>
        <end position="601"/>
    </location>
</feature>
<feature type="region of interest" description="Disordered" evidence="4">
    <location>
        <begin position="22"/>
        <end position="48"/>
    </location>
</feature>
<feature type="region of interest" description="Interaction with DNA" evidence="1">
    <location>
        <begin position="261"/>
        <end position="262"/>
    </location>
</feature>
<feature type="region of interest" description="Interaction with DNA" evidence="1">
    <location>
        <begin position="324"/>
        <end position="329"/>
    </location>
</feature>
<feature type="region of interest" description="Interaction with DNA" evidence="1">
    <location>
        <begin position="421"/>
        <end position="423"/>
    </location>
</feature>
<feature type="active site" description="O-(3'-phospho-DNA)-tyrosine intermediate" evidence="2 3">
    <location>
        <position position="559"/>
    </location>
</feature>
<feature type="site" description="Interaction with DNA" evidence="1">
    <location>
        <position position="152"/>
    </location>
</feature>
<feature type="site" description="Interaction with DNA" evidence="1">
    <location>
        <position position="200"/>
    </location>
</feature>
<feature type="site" description="Interaction with DNA" evidence="1">
    <location>
        <position position="248"/>
    </location>
</feature>
<feature type="site" description="Interaction with DNA" evidence="1">
    <location>
        <position position="279"/>
    </location>
</feature>
<feature type="site" description="Interaction with DNA" evidence="1">
    <location>
        <position position="337"/>
    </location>
</feature>
<feature type="site" description="Interaction with DNA" evidence="1">
    <location>
        <position position="368"/>
    </location>
</feature>
<feature type="site" description="Interaction with DNA" evidence="1">
    <location>
        <position position="410"/>
    </location>
</feature>
<feature type="site" description="Interaction with DNA" evidence="1">
    <location>
        <position position="468"/>
    </location>
</feature>
<feature type="site" description="Interaction with DNA" evidence="1">
    <location>
        <position position="486"/>
    </location>
</feature>
<feature type="splice variant" id="VSP_044783" description="In isoform 2." evidence="8">
    <location>
        <begin position="1"/>
        <end position="98"/>
    </location>
</feature>
<feature type="sequence variant" id="VAR_052593" description="In dbSNP:rs11544484." evidence="7">
    <original>V</original>
    <variation>I</variation>
    <location>
        <position position="256"/>
    </location>
</feature>
<feature type="sequence variant" id="VAR_021863" description="In dbSNP:rs2293925." evidence="6">
    <original>R</original>
    <variation>W</variation>
    <location>
        <position position="525"/>
    </location>
</feature>
<feature type="sequence conflict" description="In Ref. 2; BAH14751." evidence="9" ref="2">
    <original>N</original>
    <variation>S</variation>
    <location>
        <position position="116"/>
    </location>
</feature>
<sequence length="601" mass="69872">MRVVRLLRLRAALTLLGEVPRRPASRGVPGSRRTQKGSGARWEKEKHEDGVKWRQLEHKGPYFAPPYEPLPDGVRFFYEGRPVRLSVAAEEVATFYGRMLDHEYTTKEVFRKNFFNDWRKEMAVEEREVIKSLDKCDFTEIHRYFVDKAAARKVLSREEKQKLKEEAEKLQQEFGYCILDGHQEKIGNFKIEPPGLFRGRGDHPKMGMLKRRITPEDVVINCSRDSKIPEPPAGHQWKEVRSDNTVTWLAAWTESVQNSIKYIMLNPCSKLKGETAWQKFETARRLRGFVDEIRSQYRADWKSREMKTRQRAVALYFIDKLALRAGNEKEDGEAADTVGCCSLRVEHVQLHPEADGCQHVVEFDFLGKDCIRYYNRVPVEKPVYKNLQLFMENKDPRDDLFDRLTTTSLNKHLQELMDGLTAKVFRTYNASITLQEQLRALTRAEDSIAAKILSYNRANRVVAILCNHQRATPSTFEKSMQNLQTKIQAKKEQVAEARAELRRARAEHKAQGDGKSRSVLEKKRRLLEKLQEQLAQLSVQATDKEENKQVALGTSKLNYLDPRISIAWCKRFRVPVEKIYSKTQRERFAWALAMAGEDFEF</sequence>
<accession>Q969P6</accession>
<accession>B7ZAR5</accession>
<accession>E7ES89</accession>
<accession>Q86ST4</accession>
<accession>Q86V82</accession>
<gene>
    <name type="primary">TOP1MT</name>
</gene>
<keyword id="KW-0025">Alternative splicing</keyword>
<keyword id="KW-0238">DNA-binding</keyword>
<keyword id="KW-0413">Isomerase</keyword>
<keyword id="KW-0496">Mitochondrion</keyword>
<keyword id="KW-1267">Proteomics identification</keyword>
<keyword id="KW-1185">Reference proteome</keyword>
<keyword id="KW-0799">Topoisomerase</keyword>
<keyword id="KW-0809">Transit peptide</keyword>
<dbReference type="EC" id="5.6.2.1" evidence="3"/>
<dbReference type="EMBL" id="AF349031">
    <property type="protein sequence ID" value="AAL10791.1"/>
    <property type="molecule type" value="Genomic_DNA"/>
</dbReference>
<dbReference type="EMBL" id="AF349018">
    <property type="protein sequence ID" value="AAL10791.1"/>
    <property type="status" value="JOINED"/>
    <property type="molecule type" value="Genomic_DNA"/>
</dbReference>
<dbReference type="EMBL" id="AF349019">
    <property type="protein sequence ID" value="AAL10791.1"/>
    <property type="status" value="JOINED"/>
    <property type="molecule type" value="Genomic_DNA"/>
</dbReference>
<dbReference type="EMBL" id="AF349020">
    <property type="protein sequence ID" value="AAL10791.1"/>
    <property type="status" value="JOINED"/>
    <property type="molecule type" value="Genomic_DNA"/>
</dbReference>
<dbReference type="EMBL" id="AF349021">
    <property type="protein sequence ID" value="AAL10791.1"/>
    <property type="status" value="JOINED"/>
    <property type="molecule type" value="Genomic_DNA"/>
</dbReference>
<dbReference type="EMBL" id="AF349022">
    <property type="protein sequence ID" value="AAL10791.1"/>
    <property type="status" value="JOINED"/>
    <property type="molecule type" value="Genomic_DNA"/>
</dbReference>
<dbReference type="EMBL" id="AF349023">
    <property type="protein sequence ID" value="AAL10791.1"/>
    <property type="status" value="JOINED"/>
    <property type="molecule type" value="Genomic_DNA"/>
</dbReference>
<dbReference type="EMBL" id="AF349024">
    <property type="protein sequence ID" value="AAL10791.1"/>
    <property type="status" value="JOINED"/>
    <property type="molecule type" value="Genomic_DNA"/>
</dbReference>
<dbReference type="EMBL" id="AF349025">
    <property type="protein sequence ID" value="AAL10791.1"/>
    <property type="status" value="JOINED"/>
    <property type="molecule type" value="Genomic_DNA"/>
</dbReference>
<dbReference type="EMBL" id="AF349026">
    <property type="protein sequence ID" value="AAL10791.1"/>
    <property type="status" value="JOINED"/>
    <property type="molecule type" value="Genomic_DNA"/>
</dbReference>
<dbReference type="EMBL" id="AF349027">
    <property type="protein sequence ID" value="AAL10791.1"/>
    <property type="status" value="JOINED"/>
    <property type="molecule type" value="Genomic_DNA"/>
</dbReference>
<dbReference type="EMBL" id="AF349028">
    <property type="protein sequence ID" value="AAL10791.1"/>
    <property type="status" value="JOINED"/>
    <property type="molecule type" value="Genomic_DNA"/>
</dbReference>
<dbReference type="EMBL" id="AF349029">
    <property type="protein sequence ID" value="AAL10791.1"/>
    <property type="status" value="JOINED"/>
    <property type="molecule type" value="Genomic_DNA"/>
</dbReference>
<dbReference type="EMBL" id="AF349030">
    <property type="protein sequence ID" value="AAL10791.1"/>
    <property type="status" value="JOINED"/>
    <property type="molecule type" value="Genomic_DNA"/>
</dbReference>
<dbReference type="EMBL" id="AF349017">
    <property type="protein sequence ID" value="AAL05624.1"/>
    <property type="molecule type" value="mRNA"/>
</dbReference>
<dbReference type="EMBL" id="AK316380">
    <property type="protein sequence ID" value="BAH14751.1"/>
    <property type="molecule type" value="mRNA"/>
</dbReference>
<dbReference type="EMBL" id="AC087793">
    <property type="status" value="NOT_ANNOTATED_CDS"/>
    <property type="molecule type" value="Genomic_DNA"/>
</dbReference>
<dbReference type="EMBL" id="BC044646">
    <property type="protein sequence ID" value="AAH44646.1"/>
    <property type="status" value="ALT_INIT"/>
    <property type="molecule type" value="mRNA"/>
</dbReference>
<dbReference type="EMBL" id="BC052285">
    <property type="protein sequence ID" value="AAH52285.1"/>
    <property type="molecule type" value="mRNA"/>
</dbReference>
<dbReference type="EMBL" id="BC071914">
    <property type="protein sequence ID" value="AAH71914.1"/>
    <property type="molecule type" value="mRNA"/>
</dbReference>
<dbReference type="CCDS" id="CCDS59115.1">
    <molecule id="Q969P6-2"/>
</dbReference>
<dbReference type="CCDS" id="CCDS6400.1">
    <molecule id="Q969P6-1"/>
</dbReference>
<dbReference type="RefSeq" id="NP_001245375.1">
    <molecule id="Q969P6-2"/>
    <property type="nucleotide sequence ID" value="NM_001258446.1"/>
</dbReference>
<dbReference type="RefSeq" id="NP_001245376.1">
    <molecule id="Q969P6-2"/>
    <property type="nucleotide sequence ID" value="NM_001258447.1"/>
</dbReference>
<dbReference type="RefSeq" id="NP_443195.1">
    <molecule id="Q969P6-1"/>
    <property type="nucleotide sequence ID" value="NM_052963.3"/>
</dbReference>
<dbReference type="SMR" id="Q969P6"/>
<dbReference type="BioGRID" id="125510">
    <property type="interactions" value="40"/>
</dbReference>
<dbReference type="FunCoup" id="Q969P6">
    <property type="interactions" value="1377"/>
</dbReference>
<dbReference type="IntAct" id="Q969P6">
    <property type="interactions" value="16"/>
</dbReference>
<dbReference type="STRING" id="9606.ENSP00000328835"/>
<dbReference type="ChEMBL" id="CHEMBL2362989"/>
<dbReference type="DrugBank" id="DB00762">
    <property type="generic name" value="Irinotecan"/>
</dbReference>
<dbReference type="DrugBank" id="DB01030">
    <property type="generic name" value="Topotecan"/>
</dbReference>
<dbReference type="DrugCentral" id="Q969P6"/>
<dbReference type="GlyGen" id="Q969P6">
    <property type="glycosylation" value="1 site, 1 O-linked glycan (1 site)"/>
</dbReference>
<dbReference type="iPTMnet" id="Q969P6"/>
<dbReference type="PhosphoSitePlus" id="Q969P6"/>
<dbReference type="SwissPalm" id="Q969P6"/>
<dbReference type="BioMuta" id="TOP1MT"/>
<dbReference type="DMDM" id="20140694"/>
<dbReference type="jPOST" id="Q969P6"/>
<dbReference type="MassIVE" id="Q969P6"/>
<dbReference type="PaxDb" id="9606-ENSP00000328835"/>
<dbReference type="PeptideAtlas" id="Q969P6"/>
<dbReference type="ProteomicsDB" id="17936"/>
<dbReference type="ProteomicsDB" id="75812">
    <molecule id="Q969P6-1"/>
</dbReference>
<dbReference type="Pumba" id="Q969P6"/>
<dbReference type="Antibodypedia" id="958">
    <property type="antibodies" value="260 antibodies from 27 providers"/>
</dbReference>
<dbReference type="CPTC" id="Q969P6">
    <property type="antibodies" value="3 antibodies"/>
</dbReference>
<dbReference type="DNASU" id="116447"/>
<dbReference type="Ensembl" id="ENST00000329245.9">
    <molecule id="Q969P6-1"/>
    <property type="protein sequence ID" value="ENSP00000328835.3"/>
    <property type="gene ID" value="ENSG00000184428.13"/>
</dbReference>
<dbReference type="Ensembl" id="ENST00000519148.5">
    <molecule id="Q969P6-2"/>
    <property type="protein sequence ID" value="ENSP00000429169.1"/>
    <property type="gene ID" value="ENSG00000184428.13"/>
</dbReference>
<dbReference type="Ensembl" id="ENST00000521193.5">
    <molecule id="Q969P6-2"/>
    <property type="protein sequence ID" value="ENSP00000428369.1"/>
    <property type="gene ID" value="ENSG00000184428.13"/>
</dbReference>
<dbReference type="Ensembl" id="ENST00000523676.5">
    <molecule id="Q969P6-2"/>
    <property type="protein sequence ID" value="ENSP00000429181.1"/>
    <property type="gene ID" value="ENSG00000184428.13"/>
</dbReference>
<dbReference type="GeneID" id="116447"/>
<dbReference type="KEGG" id="hsa:116447"/>
<dbReference type="MANE-Select" id="ENST00000329245.9">
    <property type="protein sequence ID" value="ENSP00000328835.3"/>
    <property type="RefSeq nucleotide sequence ID" value="NM_052963.3"/>
    <property type="RefSeq protein sequence ID" value="NP_443195.1"/>
</dbReference>
<dbReference type="UCSC" id="uc003yxz.6">
    <molecule id="Q969P6-1"/>
    <property type="organism name" value="human"/>
</dbReference>
<dbReference type="AGR" id="HGNC:29787"/>
<dbReference type="CTD" id="116447"/>
<dbReference type="DisGeNET" id="116447"/>
<dbReference type="GeneCards" id="TOP1MT"/>
<dbReference type="HGNC" id="HGNC:29787">
    <property type="gene designation" value="TOP1MT"/>
</dbReference>
<dbReference type="HPA" id="ENSG00000184428">
    <property type="expression patterns" value="Low tissue specificity"/>
</dbReference>
<dbReference type="MalaCards" id="TOP1MT"/>
<dbReference type="MIM" id="606387">
    <property type="type" value="gene"/>
</dbReference>
<dbReference type="neXtProt" id="NX_Q969P6"/>
<dbReference type="OpenTargets" id="ENSG00000184428"/>
<dbReference type="PharmGKB" id="PA134922772"/>
<dbReference type="VEuPathDB" id="HostDB:ENSG00000184428"/>
<dbReference type="eggNOG" id="KOG0981">
    <property type="taxonomic scope" value="Eukaryota"/>
</dbReference>
<dbReference type="GeneTree" id="ENSGT00940000162943"/>
<dbReference type="HOGENOM" id="CLU_009193_2_0_1"/>
<dbReference type="InParanoid" id="Q969P6"/>
<dbReference type="OMA" id="NWWEQEN"/>
<dbReference type="OrthoDB" id="47179at2759"/>
<dbReference type="PAN-GO" id="Q969P6">
    <property type="GO annotations" value="4 GO annotations based on evolutionary models"/>
</dbReference>
<dbReference type="PhylomeDB" id="Q969P6"/>
<dbReference type="TreeFam" id="TF105281"/>
<dbReference type="BRENDA" id="5.6.2.1">
    <property type="organism ID" value="2681"/>
</dbReference>
<dbReference type="PathwayCommons" id="Q969P6"/>
<dbReference type="SignaLink" id="Q969P6"/>
<dbReference type="SIGNOR" id="Q969P6"/>
<dbReference type="BioGRID-ORCS" id="116447">
    <property type="hits" value="63 hits in 1164 CRISPR screens"/>
</dbReference>
<dbReference type="CD-CODE" id="91857CE7">
    <property type="entry name" value="Nucleolus"/>
</dbReference>
<dbReference type="ChiTaRS" id="TOP1MT">
    <property type="organism name" value="human"/>
</dbReference>
<dbReference type="GenomeRNAi" id="116447"/>
<dbReference type="Pharos" id="Q969P6">
    <property type="development level" value="Tclin"/>
</dbReference>
<dbReference type="PRO" id="PR:Q969P6"/>
<dbReference type="Proteomes" id="UP000005640">
    <property type="component" value="Chromosome 8"/>
</dbReference>
<dbReference type="RNAct" id="Q969P6">
    <property type="molecule type" value="protein"/>
</dbReference>
<dbReference type="Bgee" id="ENSG00000184428">
    <property type="expression patterns" value="Expressed in right lobe of liver and 139 other cell types or tissues"/>
</dbReference>
<dbReference type="ExpressionAtlas" id="Q969P6">
    <property type="expression patterns" value="baseline and differential"/>
</dbReference>
<dbReference type="GO" id="GO:0005694">
    <property type="term" value="C:chromosome"/>
    <property type="evidence" value="ECO:0007669"/>
    <property type="project" value="InterPro"/>
</dbReference>
<dbReference type="GO" id="GO:0042645">
    <property type="term" value="C:mitochondrial nucleoid"/>
    <property type="evidence" value="ECO:0000314"/>
    <property type="project" value="BHF-UCL"/>
</dbReference>
<dbReference type="GO" id="GO:0005739">
    <property type="term" value="C:mitochondrion"/>
    <property type="evidence" value="ECO:0000314"/>
    <property type="project" value="HPA"/>
</dbReference>
<dbReference type="GO" id="GO:0005654">
    <property type="term" value="C:nucleoplasm"/>
    <property type="evidence" value="ECO:0000314"/>
    <property type="project" value="HPA"/>
</dbReference>
<dbReference type="GO" id="GO:0003677">
    <property type="term" value="F:DNA binding"/>
    <property type="evidence" value="ECO:0007669"/>
    <property type="project" value="UniProtKB-KW"/>
</dbReference>
<dbReference type="GO" id="GO:0003917">
    <property type="term" value="F:DNA topoisomerase type I (single strand cut, ATP-independent) activity"/>
    <property type="evidence" value="ECO:0000318"/>
    <property type="project" value="GO_Central"/>
</dbReference>
<dbReference type="GO" id="GO:0006260">
    <property type="term" value="P:DNA replication"/>
    <property type="evidence" value="ECO:0000318"/>
    <property type="project" value="GO_Central"/>
</dbReference>
<dbReference type="GO" id="GO:0006265">
    <property type="term" value="P:DNA topological change"/>
    <property type="evidence" value="ECO:0000318"/>
    <property type="project" value="GO_Central"/>
</dbReference>
<dbReference type="CDD" id="cd00659">
    <property type="entry name" value="Topo_IB_C"/>
    <property type="match status" value="1"/>
</dbReference>
<dbReference type="CDD" id="cd03488">
    <property type="entry name" value="Topoisomer_IB_N_htopoI_like"/>
    <property type="match status" value="1"/>
</dbReference>
<dbReference type="FunFam" id="1.10.132.10:FF:000001">
    <property type="entry name" value="DNA topoisomerase I"/>
    <property type="match status" value="1"/>
</dbReference>
<dbReference type="FunFam" id="2.170.11.10:FF:000002">
    <property type="entry name" value="DNA topoisomerase I"/>
    <property type="match status" value="1"/>
</dbReference>
<dbReference type="FunFam" id="3.90.15.10:FF:000005">
    <property type="entry name" value="DNA topoisomerase I"/>
    <property type="match status" value="1"/>
</dbReference>
<dbReference type="FunFam" id="1.10.10.41:FF:000003">
    <property type="entry name" value="DNA topoisomerase I, mitochondrial"/>
    <property type="match status" value="1"/>
</dbReference>
<dbReference type="Gene3D" id="1.10.132.10">
    <property type="match status" value="1"/>
</dbReference>
<dbReference type="Gene3D" id="2.170.11.10">
    <property type="entry name" value="DNA Topoisomerase I, domain 2"/>
    <property type="match status" value="1"/>
</dbReference>
<dbReference type="Gene3D" id="3.90.15.10">
    <property type="entry name" value="Topoisomerase I, Chain A, domain 3"/>
    <property type="match status" value="1"/>
</dbReference>
<dbReference type="Gene3D" id="1.10.10.41">
    <property type="entry name" value="Yeast DNA topoisomerase - domain 1"/>
    <property type="match status" value="1"/>
</dbReference>
<dbReference type="InterPro" id="IPR011010">
    <property type="entry name" value="DNA_brk_join_enz"/>
</dbReference>
<dbReference type="InterPro" id="IPR013034">
    <property type="entry name" value="DNA_topo_DNA_db_N_dom1"/>
</dbReference>
<dbReference type="InterPro" id="IPR013030">
    <property type="entry name" value="DNA_topo_DNA_db_N_dom2"/>
</dbReference>
<dbReference type="InterPro" id="IPR001631">
    <property type="entry name" value="TopoI"/>
</dbReference>
<dbReference type="InterPro" id="IPR025834">
    <property type="entry name" value="TopoI_C_dom"/>
</dbReference>
<dbReference type="InterPro" id="IPR014711">
    <property type="entry name" value="TopoI_cat_a-hlx-sub_euk"/>
</dbReference>
<dbReference type="InterPro" id="IPR014727">
    <property type="entry name" value="TopoI_cat_a/b-sub_euk"/>
</dbReference>
<dbReference type="InterPro" id="IPR013500">
    <property type="entry name" value="TopoI_cat_euk"/>
</dbReference>
<dbReference type="InterPro" id="IPR008336">
    <property type="entry name" value="TopoI_DNA-bd_euk"/>
</dbReference>
<dbReference type="InterPro" id="IPR036202">
    <property type="entry name" value="TopoI_DNA-bd_euk_N_sf"/>
</dbReference>
<dbReference type="InterPro" id="IPR013499">
    <property type="entry name" value="TopoI_euk"/>
</dbReference>
<dbReference type="InterPro" id="IPR018521">
    <property type="entry name" value="TopoIB_AS"/>
</dbReference>
<dbReference type="InterPro" id="IPR048045">
    <property type="entry name" value="Topoisomer_I_DNA-bd"/>
</dbReference>
<dbReference type="InterPro" id="IPR051062">
    <property type="entry name" value="Topoisomerase_IB"/>
</dbReference>
<dbReference type="PANTHER" id="PTHR10290">
    <property type="entry name" value="DNA TOPOISOMERASE I"/>
    <property type="match status" value="1"/>
</dbReference>
<dbReference type="PANTHER" id="PTHR10290:SF1">
    <property type="entry name" value="DNA TOPOISOMERASE I, MITOCHONDRIAL"/>
    <property type="match status" value="1"/>
</dbReference>
<dbReference type="Pfam" id="PF14370">
    <property type="entry name" value="Topo_C_assoc"/>
    <property type="match status" value="1"/>
</dbReference>
<dbReference type="Pfam" id="PF01028">
    <property type="entry name" value="Topoisom_I"/>
    <property type="match status" value="1"/>
</dbReference>
<dbReference type="Pfam" id="PF02919">
    <property type="entry name" value="Topoisom_I_N"/>
    <property type="match status" value="1"/>
</dbReference>
<dbReference type="PRINTS" id="PR00416">
    <property type="entry name" value="EUTPISMRASEI"/>
</dbReference>
<dbReference type="SMART" id="SM00435">
    <property type="entry name" value="TOPEUc"/>
    <property type="match status" value="1"/>
</dbReference>
<dbReference type="SUPFAM" id="SSF56349">
    <property type="entry name" value="DNA breaking-rejoining enzymes"/>
    <property type="match status" value="1"/>
</dbReference>
<dbReference type="SUPFAM" id="SSF46596">
    <property type="entry name" value="Eukaryotic DNA topoisomerase I, dispensable insert domain"/>
    <property type="match status" value="1"/>
</dbReference>
<dbReference type="SUPFAM" id="SSF56741">
    <property type="entry name" value="Eukaryotic DNA topoisomerase I, N-terminal DNA-binding fragment"/>
    <property type="match status" value="1"/>
</dbReference>
<dbReference type="PROSITE" id="PS00176">
    <property type="entry name" value="TOPO_IB_1"/>
    <property type="match status" value="1"/>
</dbReference>
<dbReference type="PROSITE" id="PS52038">
    <property type="entry name" value="TOPO_IB_2"/>
    <property type="match status" value="1"/>
</dbReference>
<proteinExistence type="evidence at protein level"/>